<keyword id="KW-0030">Aminoacyl-tRNA synthetase</keyword>
<keyword id="KW-0067">ATP-binding</keyword>
<keyword id="KW-0963">Cytoplasm</keyword>
<keyword id="KW-0436">Ligase</keyword>
<keyword id="KW-0547">Nucleotide-binding</keyword>
<keyword id="KW-0648">Protein biosynthesis</keyword>
<keyword id="KW-1185">Reference proteome</keyword>
<comment type="catalytic activity">
    <reaction evidence="1">
        <text>tRNA(Arg) + L-arginine + ATP = L-arginyl-tRNA(Arg) + AMP + diphosphate</text>
        <dbReference type="Rhea" id="RHEA:20301"/>
        <dbReference type="Rhea" id="RHEA-COMP:9658"/>
        <dbReference type="Rhea" id="RHEA-COMP:9673"/>
        <dbReference type="ChEBI" id="CHEBI:30616"/>
        <dbReference type="ChEBI" id="CHEBI:32682"/>
        <dbReference type="ChEBI" id="CHEBI:33019"/>
        <dbReference type="ChEBI" id="CHEBI:78442"/>
        <dbReference type="ChEBI" id="CHEBI:78513"/>
        <dbReference type="ChEBI" id="CHEBI:456215"/>
        <dbReference type="EC" id="6.1.1.19"/>
    </reaction>
</comment>
<comment type="subunit">
    <text evidence="1">Monomer.</text>
</comment>
<comment type="subcellular location">
    <subcellularLocation>
        <location evidence="1">Cytoplasm</location>
    </subcellularLocation>
</comment>
<comment type="similarity">
    <text evidence="1">Belongs to the class-I aminoacyl-tRNA synthetase family.</text>
</comment>
<accession>Q2K975</accession>
<evidence type="ECO:0000255" key="1">
    <source>
        <dbReference type="HAMAP-Rule" id="MF_00123"/>
    </source>
</evidence>
<gene>
    <name evidence="1" type="primary">argS</name>
    <name type="ordered locus">RHE_CH01818</name>
</gene>
<sequence>MNLFTDFEARIKTALEQIDLVREKRSELDFGRIAVEPPRDASHGDVATNAAMVLAKPLGTNPRALADVIIAKLKEDADVADVSVAGPGFINIRLAVGYWQRLLASIIGAGIDYGRSSLGEGRTVNVEYVSANPTGPMHVGHCRGAVVGDALANLLAFAGYGVEKEYYINDAGSQIDVLARSVFLRYREALGERIGEIPSGLYPGDYLVPVGQSLAADYGVRLHNMPEEEWMPIVKDRTIDAMMAMIREDLAALNVHHDIFFSERTLHANGAAAIRTAINDLTFKGYVYKGTLPPPKGQLPEDWEDREQTLFRSTEVGDDIDRPLIKSDGSYTYFAADVAYFKNKFDRGFEEMIYVLGADHGGYVKRLEAVARGVSDGKAKLTVLLCQLVKLYRNGEPVKMSKRSGDFVTLRDVVEEVGRDSVRFMMLYRKNSEPLDFDFAKVTEQSKDNPVFYVQYAHARCMSVFRQAKEAFAGLDVSPEDLAKAVAGIEDPAELQLVAKLAEFPRIIESAAQSQEPHRIAFYLYDLASAFHAHWNKGKDQPELRFVNDKNRESTIARLGLVYAVASVLKSGLAITGTAAPDEMR</sequence>
<reference key="1">
    <citation type="journal article" date="2006" name="Proc. Natl. Acad. Sci. U.S.A.">
        <title>The partitioned Rhizobium etli genome: genetic and metabolic redundancy in seven interacting replicons.</title>
        <authorList>
            <person name="Gonzalez V."/>
            <person name="Santamaria R.I."/>
            <person name="Bustos P."/>
            <person name="Hernandez-Gonzalez I."/>
            <person name="Medrano-Soto A."/>
            <person name="Moreno-Hagelsieb G."/>
            <person name="Janga S.C."/>
            <person name="Ramirez M.A."/>
            <person name="Jimenez-Jacinto V."/>
            <person name="Collado-Vides J."/>
            <person name="Davila G."/>
        </authorList>
    </citation>
    <scope>NUCLEOTIDE SEQUENCE [LARGE SCALE GENOMIC DNA]</scope>
    <source>
        <strain>ATCC 51251 / DSM 11541 / JCM 21823 / NBRC 15573 / CFN 42</strain>
    </source>
</reference>
<feature type="chain" id="PRO_0000242076" description="Arginine--tRNA ligase">
    <location>
        <begin position="1"/>
        <end position="585"/>
    </location>
</feature>
<feature type="short sequence motif" description="'HIGH' region">
    <location>
        <begin position="131"/>
        <end position="141"/>
    </location>
</feature>
<dbReference type="EC" id="6.1.1.19" evidence="1"/>
<dbReference type="EMBL" id="CP000133">
    <property type="protein sequence ID" value="ABC90611.1"/>
    <property type="molecule type" value="Genomic_DNA"/>
</dbReference>
<dbReference type="RefSeq" id="WP_011425108.1">
    <property type="nucleotide sequence ID" value="NC_007761.1"/>
</dbReference>
<dbReference type="SMR" id="Q2K975"/>
<dbReference type="KEGG" id="ret:RHE_CH01818"/>
<dbReference type="eggNOG" id="COG0018">
    <property type="taxonomic scope" value="Bacteria"/>
</dbReference>
<dbReference type="HOGENOM" id="CLU_006406_0_1_5"/>
<dbReference type="OrthoDB" id="9803211at2"/>
<dbReference type="Proteomes" id="UP000001936">
    <property type="component" value="Chromosome"/>
</dbReference>
<dbReference type="GO" id="GO:0005737">
    <property type="term" value="C:cytoplasm"/>
    <property type="evidence" value="ECO:0007669"/>
    <property type="project" value="UniProtKB-SubCell"/>
</dbReference>
<dbReference type="GO" id="GO:0004814">
    <property type="term" value="F:arginine-tRNA ligase activity"/>
    <property type="evidence" value="ECO:0007669"/>
    <property type="project" value="UniProtKB-UniRule"/>
</dbReference>
<dbReference type="GO" id="GO:0005524">
    <property type="term" value="F:ATP binding"/>
    <property type="evidence" value="ECO:0007669"/>
    <property type="project" value="UniProtKB-UniRule"/>
</dbReference>
<dbReference type="GO" id="GO:0006420">
    <property type="term" value="P:arginyl-tRNA aminoacylation"/>
    <property type="evidence" value="ECO:0007669"/>
    <property type="project" value="UniProtKB-UniRule"/>
</dbReference>
<dbReference type="CDD" id="cd00671">
    <property type="entry name" value="ArgRS_core"/>
    <property type="match status" value="1"/>
</dbReference>
<dbReference type="FunFam" id="1.10.730.10:FF:000008">
    <property type="entry name" value="Arginine--tRNA ligase"/>
    <property type="match status" value="1"/>
</dbReference>
<dbReference type="Gene3D" id="3.30.1360.70">
    <property type="entry name" value="Arginyl tRNA synthetase N-terminal domain"/>
    <property type="match status" value="1"/>
</dbReference>
<dbReference type="Gene3D" id="3.40.50.620">
    <property type="entry name" value="HUPs"/>
    <property type="match status" value="1"/>
</dbReference>
<dbReference type="Gene3D" id="1.10.730.10">
    <property type="entry name" value="Isoleucyl-tRNA Synthetase, Domain 1"/>
    <property type="match status" value="1"/>
</dbReference>
<dbReference type="HAMAP" id="MF_00123">
    <property type="entry name" value="Arg_tRNA_synth"/>
    <property type="match status" value="1"/>
</dbReference>
<dbReference type="InterPro" id="IPR001412">
    <property type="entry name" value="aa-tRNA-synth_I_CS"/>
</dbReference>
<dbReference type="InterPro" id="IPR001278">
    <property type="entry name" value="Arg-tRNA-ligase"/>
</dbReference>
<dbReference type="InterPro" id="IPR005148">
    <property type="entry name" value="Arg-tRNA-synth_N"/>
</dbReference>
<dbReference type="InterPro" id="IPR036695">
    <property type="entry name" value="Arg-tRNA-synth_N_sf"/>
</dbReference>
<dbReference type="InterPro" id="IPR035684">
    <property type="entry name" value="ArgRS_core"/>
</dbReference>
<dbReference type="InterPro" id="IPR008909">
    <property type="entry name" value="DALR_anticod-bd"/>
</dbReference>
<dbReference type="InterPro" id="IPR014729">
    <property type="entry name" value="Rossmann-like_a/b/a_fold"/>
</dbReference>
<dbReference type="InterPro" id="IPR009080">
    <property type="entry name" value="tRNAsynth_Ia_anticodon-bd"/>
</dbReference>
<dbReference type="NCBIfam" id="TIGR00456">
    <property type="entry name" value="argS"/>
    <property type="match status" value="1"/>
</dbReference>
<dbReference type="PANTHER" id="PTHR11956:SF5">
    <property type="entry name" value="ARGININE--TRNA LIGASE, CYTOPLASMIC"/>
    <property type="match status" value="1"/>
</dbReference>
<dbReference type="PANTHER" id="PTHR11956">
    <property type="entry name" value="ARGINYL-TRNA SYNTHETASE"/>
    <property type="match status" value="1"/>
</dbReference>
<dbReference type="Pfam" id="PF03485">
    <property type="entry name" value="Arg_tRNA_synt_N"/>
    <property type="match status" value="1"/>
</dbReference>
<dbReference type="Pfam" id="PF05746">
    <property type="entry name" value="DALR_1"/>
    <property type="match status" value="1"/>
</dbReference>
<dbReference type="Pfam" id="PF00750">
    <property type="entry name" value="tRNA-synt_1d"/>
    <property type="match status" value="2"/>
</dbReference>
<dbReference type="PRINTS" id="PR01038">
    <property type="entry name" value="TRNASYNTHARG"/>
</dbReference>
<dbReference type="SMART" id="SM01016">
    <property type="entry name" value="Arg_tRNA_synt_N"/>
    <property type="match status" value="1"/>
</dbReference>
<dbReference type="SMART" id="SM00836">
    <property type="entry name" value="DALR_1"/>
    <property type="match status" value="1"/>
</dbReference>
<dbReference type="SUPFAM" id="SSF47323">
    <property type="entry name" value="Anticodon-binding domain of a subclass of class I aminoacyl-tRNA synthetases"/>
    <property type="match status" value="1"/>
</dbReference>
<dbReference type="SUPFAM" id="SSF55190">
    <property type="entry name" value="Arginyl-tRNA synthetase (ArgRS), N-terminal 'additional' domain"/>
    <property type="match status" value="1"/>
</dbReference>
<dbReference type="SUPFAM" id="SSF52374">
    <property type="entry name" value="Nucleotidylyl transferase"/>
    <property type="match status" value="1"/>
</dbReference>
<dbReference type="PROSITE" id="PS00178">
    <property type="entry name" value="AA_TRNA_LIGASE_I"/>
    <property type="match status" value="1"/>
</dbReference>
<protein>
    <recommendedName>
        <fullName evidence="1">Arginine--tRNA ligase</fullName>
        <ecNumber evidence="1">6.1.1.19</ecNumber>
    </recommendedName>
    <alternativeName>
        <fullName evidence="1">Arginyl-tRNA synthetase</fullName>
        <shortName evidence="1">ArgRS</shortName>
    </alternativeName>
</protein>
<organism>
    <name type="scientific">Rhizobium etli (strain ATCC 51251 / DSM 11541 / JCM 21823 / NBRC 15573 / CFN 42)</name>
    <dbReference type="NCBI Taxonomy" id="347834"/>
    <lineage>
        <taxon>Bacteria</taxon>
        <taxon>Pseudomonadati</taxon>
        <taxon>Pseudomonadota</taxon>
        <taxon>Alphaproteobacteria</taxon>
        <taxon>Hyphomicrobiales</taxon>
        <taxon>Rhizobiaceae</taxon>
        <taxon>Rhizobium/Agrobacterium group</taxon>
        <taxon>Rhizobium</taxon>
    </lineage>
</organism>
<name>SYR_RHIEC</name>
<proteinExistence type="inferred from homology"/>